<dbReference type="EMBL" id="AE004439">
    <property type="protein sequence ID" value="AAK03264.1"/>
    <property type="molecule type" value="Genomic_DNA"/>
</dbReference>
<dbReference type="RefSeq" id="WP_005717557.1">
    <property type="nucleotide sequence ID" value="NC_002663.1"/>
</dbReference>
<dbReference type="SMR" id="Q9CLN8"/>
<dbReference type="STRING" id="272843.PM1180"/>
<dbReference type="EnsemblBacteria" id="AAK03264">
    <property type="protein sequence ID" value="AAK03264"/>
    <property type="gene ID" value="PM1180"/>
</dbReference>
<dbReference type="GeneID" id="77206495"/>
<dbReference type="KEGG" id="pmu:PM1180"/>
<dbReference type="PATRIC" id="fig|272843.6.peg.1191"/>
<dbReference type="HOGENOM" id="CLU_113441_6_1_6"/>
<dbReference type="OrthoDB" id="9812702at2"/>
<dbReference type="Proteomes" id="UP000000809">
    <property type="component" value="Chromosome"/>
</dbReference>
<dbReference type="GO" id="GO:0022627">
    <property type="term" value="C:cytosolic small ribosomal subunit"/>
    <property type="evidence" value="ECO:0007669"/>
    <property type="project" value="TreeGrafter"/>
</dbReference>
<dbReference type="GO" id="GO:0070181">
    <property type="term" value="F:small ribosomal subunit rRNA binding"/>
    <property type="evidence" value="ECO:0007669"/>
    <property type="project" value="TreeGrafter"/>
</dbReference>
<dbReference type="GO" id="GO:0003735">
    <property type="term" value="F:structural constituent of ribosome"/>
    <property type="evidence" value="ECO:0007669"/>
    <property type="project" value="InterPro"/>
</dbReference>
<dbReference type="GO" id="GO:0006412">
    <property type="term" value="P:translation"/>
    <property type="evidence" value="ECO:0007669"/>
    <property type="project" value="UniProtKB-UniRule"/>
</dbReference>
<dbReference type="CDD" id="cd00473">
    <property type="entry name" value="bS6"/>
    <property type="match status" value="1"/>
</dbReference>
<dbReference type="FunFam" id="3.30.70.60:FF:000003">
    <property type="entry name" value="30S ribosomal protein S6"/>
    <property type="match status" value="1"/>
</dbReference>
<dbReference type="Gene3D" id="3.30.70.60">
    <property type="match status" value="1"/>
</dbReference>
<dbReference type="HAMAP" id="MF_00360">
    <property type="entry name" value="Ribosomal_bS6"/>
    <property type="match status" value="1"/>
</dbReference>
<dbReference type="InterPro" id="IPR000529">
    <property type="entry name" value="Ribosomal_bS6"/>
</dbReference>
<dbReference type="InterPro" id="IPR020815">
    <property type="entry name" value="Ribosomal_bS6_CS"/>
</dbReference>
<dbReference type="InterPro" id="IPR035980">
    <property type="entry name" value="Ribosomal_bS6_sf"/>
</dbReference>
<dbReference type="InterPro" id="IPR020814">
    <property type="entry name" value="Ribosomal_S6_plastid/chlpt"/>
</dbReference>
<dbReference type="InterPro" id="IPR014717">
    <property type="entry name" value="Transl_elong_EF1B/ribsomal_bS6"/>
</dbReference>
<dbReference type="NCBIfam" id="TIGR00166">
    <property type="entry name" value="S6"/>
    <property type="match status" value="1"/>
</dbReference>
<dbReference type="PANTHER" id="PTHR21011">
    <property type="entry name" value="MITOCHONDRIAL 28S RIBOSOMAL PROTEIN S6"/>
    <property type="match status" value="1"/>
</dbReference>
<dbReference type="PANTHER" id="PTHR21011:SF1">
    <property type="entry name" value="SMALL RIBOSOMAL SUBUNIT PROTEIN BS6M"/>
    <property type="match status" value="1"/>
</dbReference>
<dbReference type="Pfam" id="PF01250">
    <property type="entry name" value="Ribosomal_S6"/>
    <property type="match status" value="1"/>
</dbReference>
<dbReference type="SUPFAM" id="SSF54995">
    <property type="entry name" value="Ribosomal protein S6"/>
    <property type="match status" value="1"/>
</dbReference>
<dbReference type="PROSITE" id="PS01048">
    <property type="entry name" value="RIBOSOMAL_S6"/>
    <property type="match status" value="1"/>
</dbReference>
<reference key="1">
    <citation type="journal article" date="2001" name="Proc. Natl. Acad. Sci. U.S.A.">
        <title>Complete genomic sequence of Pasteurella multocida Pm70.</title>
        <authorList>
            <person name="May B.J."/>
            <person name="Zhang Q."/>
            <person name="Li L.L."/>
            <person name="Paustian M.L."/>
            <person name="Whittam T.S."/>
            <person name="Kapur V."/>
        </authorList>
    </citation>
    <scope>NUCLEOTIDE SEQUENCE [LARGE SCALE GENOMIC DNA]</scope>
    <source>
        <strain>Pm70</strain>
    </source>
</reference>
<accession>Q9CLN8</accession>
<comment type="function">
    <text evidence="1">Binds together with bS18 to 16S ribosomal RNA.</text>
</comment>
<comment type="similarity">
    <text evidence="2">Belongs to the bacterial ribosomal protein bS6 family.</text>
</comment>
<feature type="chain" id="PRO_0000176811" description="Small ribosomal subunit protein bS6">
    <location>
        <begin position="1"/>
        <end position="125"/>
    </location>
</feature>
<gene>
    <name type="primary">rpsF</name>
    <name type="synonym">rps6</name>
    <name type="ordered locus">PM1180</name>
</gene>
<protein>
    <recommendedName>
        <fullName evidence="2">Small ribosomal subunit protein bS6</fullName>
    </recommendedName>
    <alternativeName>
        <fullName>30S ribosomal protein S6</fullName>
    </alternativeName>
</protein>
<name>RS6_PASMU</name>
<evidence type="ECO:0000250" key="1"/>
<evidence type="ECO:0000305" key="2"/>
<proteinExistence type="inferred from homology"/>
<sequence length="125" mass="14505">MRHYEIVFMVHPDQSEQVPGMIERYTGSVKEAGGQVHRLEDWGRRQLAYPINKLHKAHYVLMNVEAPQEVIDELETTFRYNDAVLRNVIIRTKHAVTEASPMVKAKDDRKALAEVENNDFEDAEE</sequence>
<organism>
    <name type="scientific">Pasteurella multocida (strain Pm70)</name>
    <dbReference type="NCBI Taxonomy" id="272843"/>
    <lineage>
        <taxon>Bacteria</taxon>
        <taxon>Pseudomonadati</taxon>
        <taxon>Pseudomonadota</taxon>
        <taxon>Gammaproteobacteria</taxon>
        <taxon>Pasteurellales</taxon>
        <taxon>Pasteurellaceae</taxon>
        <taxon>Pasteurella</taxon>
    </lineage>
</organism>
<keyword id="KW-1185">Reference proteome</keyword>
<keyword id="KW-0687">Ribonucleoprotein</keyword>
<keyword id="KW-0689">Ribosomal protein</keyword>
<keyword id="KW-0694">RNA-binding</keyword>
<keyword id="KW-0699">rRNA-binding</keyword>